<dbReference type="EC" id="2.8.1.13" evidence="1"/>
<dbReference type="EMBL" id="AL591979">
    <property type="protein sequence ID" value="CAC99590.1"/>
    <property type="molecule type" value="Genomic_DNA"/>
</dbReference>
<dbReference type="PIR" id="AH1263">
    <property type="entry name" value="AH1263"/>
</dbReference>
<dbReference type="RefSeq" id="NP_465037.1">
    <property type="nucleotide sequence ID" value="NC_003210.1"/>
</dbReference>
<dbReference type="RefSeq" id="WP_003723698.1">
    <property type="nucleotide sequence ID" value="NZ_CP149495.1"/>
</dbReference>
<dbReference type="SMR" id="Q8Y714"/>
<dbReference type="STRING" id="169963.gene:17594169"/>
<dbReference type="PaxDb" id="169963-lmo1512"/>
<dbReference type="EnsemblBacteria" id="CAC99590">
    <property type="protein sequence ID" value="CAC99590"/>
    <property type="gene ID" value="CAC99590"/>
</dbReference>
<dbReference type="GeneID" id="987757"/>
<dbReference type="KEGG" id="lmo:lmo1512"/>
<dbReference type="PATRIC" id="fig|169963.11.peg.1553"/>
<dbReference type="eggNOG" id="COG0482">
    <property type="taxonomic scope" value="Bacteria"/>
</dbReference>
<dbReference type="HOGENOM" id="CLU_035188_1_0_9"/>
<dbReference type="OrthoDB" id="9800696at2"/>
<dbReference type="PhylomeDB" id="Q8Y714"/>
<dbReference type="BioCyc" id="LMON169963:LMO1512-MONOMER"/>
<dbReference type="Proteomes" id="UP000000817">
    <property type="component" value="Chromosome"/>
</dbReference>
<dbReference type="GO" id="GO:0005737">
    <property type="term" value="C:cytoplasm"/>
    <property type="evidence" value="ECO:0007669"/>
    <property type="project" value="UniProtKB-SubCell"/>
</dbReference>
<dbReference type="GO" id="GO:0005524">
    <property type="term" value="F:ATP binding"/>
    <property type="evidence" value="ECO:0007669"/>
    <property type="project" value="UniProtKB-KW"/>
</dbReference>
<dbReference type="GO" id="GO:0000049">
    <property type="term" value="F:tRNA binding"/>
    <property type="evidence" value="ECO:0007669"/>
    <property type="project" value="UniProtKB-KW"/>
</dbReference>
<dbReference type="GO" id="GO:0103016">
    <property type="term" value="F:tRNA-uridine 2-sulfurtransferase activity"/>
    <property type="evidence" value="ECO:0007669"/>
    <property type="project" value="UniProtKB-EC"/>
</dbReference>
<dbReference type="GO" id="GO:0002143">
    <property type="term" value="P:tRNA wobble position uridine thiolation"/>
    <property type="evidence" value="ECO:0000318"/>
    <property type="project" value="GO_Central"/>
</dbReference>
<dbReference type="CDD" id="cd01998">
    <property type="entry name" value="MnmA_TRMU-like"/>
    <property type="match status" value="1"/>
</dbReference>
<dbReference type="FunFam" id="2.30.30.280:FF:000001">
    <property type="entry name" value="tRNA-specific 2-thiouridylase MnmA"/>
    <property type="match status" value="1"/>
</dbReference>
<dbReference type="FunFam" id="2.40.30.10:FF:000023">
    <property type="entry name" value="tRNA-specific 2-thiouridylase MnmA"/>
    <property type="match status" value="1"/>
</dbReference>
<dbReference type="FunFam" id="3.40.50.620:FF:000004">
    <property type="entry name" value="tRNA-specific 2-thiouridylase MnmA"/>
    <property type="match status" value="1"/>
</dbReference>
<dbReference type="Gene3D" id="2.30.30.280">
    <property type="entry name" value="Adenine nucleotide alpha hydrolases-like domains"/>
    <property type="match status" value="1"/>
</dbReference>
<dbReference type="Gene3D" id="3.40.50.620">
    <property type="entry name" value="HUPs"/>
    <property type="match status" value="1"/>
</dbReference>
<dbReference type="Gene3D" id="2.40.30.10">
    <property type="entry name" value="Translation factors"/>
    <property type="match status" value="1"/>
</dbReference>
<dbReference type="HAMAP" id="MF_00144">
    <property type="entry name" value="tRNA_thiouridyl_MnmA"/>
    <property type="match status" value="1"/>
</dbReference>
<dbReference type="InterPro" id="IPR004506">
    <property type="entry name" value="MnmA-like"/>
</dbReference>
<dbReference type="InterPro" id="IPR046885">
    <property type="entry name" value="MnmA-like_C"/>
</dbReference>
<dbReference type="InterPro" id="IPR046884">
    <property type="entry name" value="MnmA-like_central"/>
</dbReference>
<dbReference type="InterPro" id="IPR023382">
    <property type="entry name" value="MnmA-like_central_sf"/>
</dbReference>
<dbReference type="InterPro" id="IPR014729">
    <property type="entry name" value="Rossmann-like_a/b/a_fold"/>
</dbReference>
<dbReference type="NCBIfam" id="NF001138">
    <property type="entry name" value="PRK00143.1"/>
    <property type="match status" value="1"/>
</dbReference>
<dbReference type="NCBIfam" id="TIGR00420">
    <property type="entry name" value="trmU"/>
    <property type="match status" value="1"/>
</dbReference>
<dbReference type="PANTHER" id="PTHR11933:SF5">
    <property type="entry name" value="MITOCHONDRIAL TRNA-SPECIFIC 2-THIOURIDYLASE 1"/>
    <property type="match status" value="1"/>
</dbReference>
<dbReference type="PANTHER" id="PTHR11933">
    <property type="entry name" value="TRNA 5-METHYLAMINOMETHYL-2-THIOURIDYLATE -METHYLTRANSFERASE"/>
    <property type="match status" value="1"/>
</dbReference>
<dbReference type="Pfam" id="PF03054">
    <property type="entry name" value="tRNA_Me_trans"/>
    <property type="match status" value="1"/>
</dbReference>
<dbReference type="Pfam" id="PF20258">
    <property type="entry name" value="tRNA_Me_trans_C"/>
    <property type="match status" value="1"/>
</dbReference>
<dbReference type="Pfam" id="PF20259">
    <property type="entry name" value="tRNA_Me_trans_M"/>
    <property type="match status" value="1"/>
</dbReference>
<dbReference type="SUPFAM" id="SSF52402">
    <property type="entry name" value="Adenine nucleotide alpha hydrolases-like"/>
    <property type="match status" value="1"/>
</dbReference>
<evidence type="ECO:0000255" key="1">
    <source>
        <dbReference type="HAMAP-Rule" id="MF_00144"/>
    </source>
</evidence>
<keyword id="KW-0067">ATP-binding</keyword>
<keyword id="KW-0963">Cytoplasm</keyword>
<keyword id="KW-1015">Disulfide bond</keyword>
<keyword id="KW-0547">Nucleotide-binding</keyword>
<keyword id="KW-1185">Reference proteome</keyword>
<keyword id="KW-0694">RNA-binding</keyword>
<keyword id="KW-0808">Transferase</keyword>
<keyword id="KW-0819">tRNA processing</keyword>
<keyword id="KW-0820">tRNA-binding</keyword>
<proteinExistence type="inferred from homology"/>
<accession>Q8Y714</accession>
<comment type="function">
    <text evidence="1">Catalyzes the 2-thiolation of uridine at the wobble position (U34) of tRNA, leading to the formation of s(2)U34.</text>
</comment>
<comment type="catalytic activity">
    <reaction evidence="1">
        <text>S-sulfanyl-L-cysteinyl-[protein] + uridine(34) in tRNA + AH2 + ATP = 2-thiouridine(34) in tRNA + L-cysteinyl-[protein] + A + AMP + diphosphate + H(+)</text>
        <dbReference type="Rhea" id="RHEA:47032"/>
        <dbReference type="Rhea" id="RHEA-COMP:10131"/>
        <dbReference type="Rhea" id="RHEA-COMP:11726"/>
        <dbReference type="Rhea" id="RHEA-COMP:11727"/>
        <dbReference type="Rhea" id="RHEA-COMP:11728"/>
        <dbReference type="ChEBI" id="CHEBI:13193"/>
        <dbReference type="ChEBI" id="CHEBI:15378"/>
        <dbReference type="ChEBI" id="CHEBI:17499"/>
        <dbReference type="ChEBI" id="CHEBI:29950"/>
        <dbReference type="ChEBI" id="CHEBI:30616"/>
        <dbReference type="ChEBI" id="CHEBI:33019"/>
        <dbReference type="ChEBI" id="CHEBI:61963"/>
        <dbReference type="ChEBI" id="CHEBI:65315"/>
        <dbReference type="ChEBI" id="CHEBI:87170"/>
        <dbReference type="ChEBI" id="CHEBI:456215"/>
        <dbReference type="EC" id="2.8.1.13"/>
    </reaction>
</comment>
<comment type="subcellular location">
    <subcellularLocation>
        <location evidence="1">Cytoplasm</location>
    </subcellularLocation>
</comment>
<comment type="similarity">
    <text evidence="1">Belongs to the MnmA/TRMU family.</text>
</comment>
<name>MNMA_LISMO</name>
<protein>
    <recommendedName>
        <fullName evidence="1">tRNA-specific 2-thiouridylase MnmA</fullName>
        <ecNumber evidence="1">2.8.1.13</ecNumber>
    </recommendedName>
</protein>
<gene>
    <name evidence="1" type="primary">mnmA</name>
    <name type="synonym">trmU</name>
    <name type="ordered locus">lmo1512</name>
</gene>
<reference key="1">
    <citation type="journal article" date="2001" name="Science">
        <title>Comparative genomics of Listeria species.</title>
        <authorList>
            <person name="Glaser P."/>
            <person name="Frangeul L."/>
            <person name="Buchrieser C."/>
            <person name="Rusniok C."/>
            <person name="Amend A."/>
            <person name="Baquero F."/>
            <person name="Berche P."/>
            <person name="Bloecker H."/>
            <person name="Brandt P."/>
            <person name="Chakraborty T."/>
            <person name="Charbit A."/>
            <person name="Chetouani F."/>
            <person name="Couve E."/>
            <person name="de Daruvar A."/>
            <person name="Dehoux P."/>
            <person name="Domann E."/>
            <person name="Dominguez-Bernal G."/>
            <person name="Duchaud E."/>
            <person name="Durant L."/>
            <person name="Dussurget O."/>
            <person name="Entian K.-D."/>
            <person name="Fsihi H."/>
            <person name="Garcia-del Portillo F."/>
            <person name="Garrido P."/>
            <person name="Gautier L."/>
            <person name="Goebel W."/>
            <person name="Gomez-Lopez N."/>
            <person name="Hain T."/>
            <person name="Hauf J."/>
            <person name="Jackson D."/>
            <person name="Jones L.-M."/>
            <person name="Kaerst U."/>
            <person name="Kreft J."/>
            <person name="Kuhn M."/>
            <person name="Kunst F."/>
            <person name="Kurapkat G."/>
            <person name="Madueno E."/>
            <person name="Maitournam A."/>
            <person name="Mata Vicente J."/>
            <person name="Ng E."/>
            <person name="Nedjari H."/>
            <person name="Nordsiek G."/>
            <person name="Novella S."/>
            <person name="de Pablos B."/>
            <person name="Perez-Diaz J.-C."/>
            <person name="Purcell R."/>
            <person name="Remmel B."/>
            <person name="Rose M."/>
            <person name="Schlueter T."/>
            <person name="Simoes N."/>
            <person name="Tierrez A."/>
            <person name="Vazquez-Boland J.-A."/>
            <person name="Voss H."/>
            <person name="Wehland J."/>
            <person name="Cossart P."/>
        </authorList>
    </citation>
    <scope>NUCLEOTIDE SEQUENCE [LARGE SCALE GENOMIC DNA]</scope>
    <source>
        <strain>ATCC BAA-679 / EGD-e</strain>
    </source>
</reference>
<organism>
    <name type="scientific">Listeria monocytogenes serovar 1/2a (strain ATCC BAA-679 / EGD-e)</name>
    <dbReference type="NCBI Taxonomy" id="169963"/>
    <lineage>
        <taxon>Bacteria</taxon>
        <taxon>Bacillati</taxon>
        <taxon>Bacillota</taxon>
        <taxon>Bacilli</taxon>
        <taxon>Bacillales</taxon>
        <taxon>Listeriaceae</taxon>
        <taxon>Listeria</taxon>
    </lineage>
</organism>
<feature type="chain" id="PRO_0000121649" description="tRNA-specific 2-thiouridylase MnmA">
    <location>
        <begin position="1"/>
        <end position="371"/>
    </location>
</feature>
<feature type="region of interest" description="Interaction with target base in tRNA" evidence="1">
    <location>
        <begin position="99"/>
        <end position="101"/>
    </location>
</feature>
<feature type="region of interest" description="Interaction with tRNA" evidence="1">
    <location>
        <begin position="150"/>
        <end position="152"/>
    </location>
</feature>
<feature type="region of interest" description="Interaction with tRNA" evidence="1">
    <location>
        <begin position="308"/>
        <end position="309"/>
    </location>
</feature>
<feature type="active site" description="Nucleophile" evidence="1">
    <location>
        <position position="104"/>
    </location>
</feature>
<feature type="active site" description="Cysteine persulfide intermediate" evidence="1">
    <location>
        <position position="200"/>
    </location>
</feature>
<feature type="binding site" evidence="1">
    <location>
        <begin position="13"/>
        <end position="20"/>
    </location>
    <ligand>
        <name>ATP</name>
        <dbReference type="ChEBI" id="CHEBI:30616"/>
    </ligand>
</feature>
<feature type="binding site" evidence="1">
    <location>
        <position position="39"/>
    </location>
    <ligand>
        <name>ATP</name>
        <dbReference type="ChEBI" id="CHEBI:30616"/>
    </ligand>
</feature>
<feature type="binding site" evidence="1">
    <location>
        <position position="128"/>
    </location>
    <ligand>
        <name>ATP</name>
        <dbReference type="ChEBI" id="CHEBI:30616"/>
    </ligand>
</feature>
<feature type="site" description="Interaction with tRNA" evidence="1">
    <location>
        <position position="129"/>
    </location>
</feature>
<feature type="site" description="Interaction with tRNA" evidence="1">
    <location>
        <position position="341"/>
    </location>
</feature>
<feature type="disulfide bond" description="Alternate" evidence="1">
    <location>
        <begin position="104"/>
        <end position="200"/>
    </location>
</feature>
<sequence length="371" mass="41504">MSTNNSDIRVVVGMSGGVDSSVTAHILKEQGYDVIGIFMKNWDDTDEFGVCTATEDYDDVIRVANQIGIPYYAVNFEKEYWDKVFTYFLDEYKLGRTPNPDVMCNKEIKFKAFLEHAESLGADYVATGHYAQVKKVGDEIELLRGVDNNKDQTYFLNQLSQDQLKKVMFPLGAMEKTEVREIAKKAGLATADKKDSTGICFIGERNFKQFLSEYLPAQPGEMRTLDGEVLGKHDGLMYYTIGQRHGLGIGGDGEPWFVVGKDLKENVLFVEQGFHHETLYSDSLIATDISFTTNAEKPKTIECTAKFRYRQTDTKVTVHLREDGTAEVVFADPVRAITPGQAVVFYDGDVCLGGGTIDTVWKNGQKLDYVG</sequence>